<dbReference type="EC" id="3.4.23.36" evidence="1"/>
<dbReference type="EMBL" id="CP000941">
    <property type="protein sequence ID" value="ACA12487.1"/>
    <property type="molecule type" value="Genomic_DNA"/>
</dbReference>
<dbReference type="RefSeq" id="WP_004085935.1">
    <property type="nucleotide sequence ID" value="NC_010513.1"/>
</dbReference>
<dbReference type="SMR" id="B0U3Q8"/>
<dbReference type="GeneID" id="93905257"/>
<dbReference type="KEGG" id="xfm:Xfasm12_1577"/>
<dbReference type="HOGENOM" id="CLU_083252_4_0_6"/>
<dbReference type="UniPathway" id="UPA00665"/>
<dbReference type="GO" id="GO:0005886">
    <property type="term" value="C:plasma membrane"/>
    <property type="evidence" value="ECO:0007669"/>
    <property type="project" value="UniProtKB-SubCell"/>
</dbReference>
<dbReference type="GO" id="GO:0004190">
    <property type="term" value="F:aspartic-type endopeptidase activity"/>
    <property type="evidence" value="ECO:0007669"/>
    <property type="project" value="UniProtKB-UniRule"/>
</dbReference>
<dbReference type="GO" id="GO:0006508">
    <property type="term" value="P:proteolysis"/>
    <property type="evidence" value="ECO:0007669"/>
    <property type="project" value="UniProtKB-KW"/>
</dbReference>
<dbReference type="HAMAP" id="MF_00161">
    <property type="entry name" value="LspA"/>
    <property type="match status" value="1"/>
</dbReference>
<dbReference type="InterPro" id="IPR001872">
    <property type="entry name" value="Peptidase_A8"/>
</dbReference>
<dbReference type="NCBIfam" id="TIGR00077">
    <property type="entry name" value="lspA"/>
    <property type="match status" value="1"/>
</dbReference>
<dbReference type="PANTHER" id="PTHR33695">
    <property type="entry name" value="LIPOPROTEIN SIGNAL PEPTIDASE"/>
    <property type="match status" value="1"/>
</dbReference>
<dbReference type="PANTHER" id="PTHR33695:SF1">
    <property type="entry name" value="LIPOPROTEIN SIGNAL PEPTIDASE"/>
    <property type="match status" value="1"/>
</dbReference>
<dbReference type="Pfam" id="PF01252">
    <property type="entry name" value="Peptidase_A8"/>
    <property type="match status" value="1"/>
</dbReference>
<dbReference type="PRINTS" id="PR00781">
    <property type="entry name" value="LIPOSIGPTASE"/>
</dbReference>
<dbReference type="PROSITE" id="PS00855">
    <property type="entry name" value="SPASE_II"/>
    <property type="match status" value="1"/>
</dbReference>
<protein>
    <recommendedName>
        <fullName evidence="1">Lipoprotein signal peptidase</fullName>
        <ecNumber evidence="1">3.4.23.36</ecNumber>
    </recommendedName>
    <alternativeName>
        <fullName evidence="1">Prolipoprotein signal peptidase</fullName>
    </alternativeName>
    <alternativeName>
        <fullName evidence="1">Signal peptidase II</fullName>
        <shortName evidence="1">SPase II</shortName>
    </alternativeName>
</protein>
<reference key="1">
    <citation type="journal article" date="2010" name="J. Bacteriol.">
        <title>Whole genome sequences of two Xylella fastidiosa strains (M12 and M23) causing almond leaf scorch disease in California.</title>
        <authorList>
            <person name="Chen J."/>
            <person name="Xie G."/>
            <person name="Han S."/>
            <person name="Chertkov O."/>
            <person name="Sims D."/>
            <person name="Civerolo E.L."/>
        </authorList>
    </citation>
    <scope>NUCLEOTIDE SEQUENCE [LARGE SCALE GENOMIC DNA]</scope>
    <source>
        <strain>M12</strain>
    </source>
</reference>
<proteinExistence type="inferred from homology"/>
<evidence type="ECO:0000255" key="1">
    <source>
        <dbReference type="HAMAP-Rule" id="MF_00161"/>
    </source>
</evidence>
<organism>
    <name type="scientific">Xylella fastidiosa (strain M12)</name>
    <dbReference type="NCBI Taxonomy" id="405440"/>
    <lineage>
        <taxon>Bacteria</taxon>
        <taxon>Pseudomonadati</taxon>
        <taxon>Pseudomonadota</taxon>
        <taxon>Gammaproteobacteria</taxon>
        <taxon>Lysobacterales</taxon>
        <taxon>Lysobacteraceae</taxon>
        <taxon>Xylella</taxon>
    </lineage>
</organism>
<sequence>MTRPTHPNALIWLLLSIAIIALDQATKAWVLTSLPEYIPVPVIHGFWNWYRSYNTGAAFSFLSDAGGWQMWLFIALALGISGLLTFWLSRTPRREWRSALPYALIIGGGIGNVIDRFLHGHVVDFIQWYVGSYYWPSFNLADSAIVAGAIGIGLLSLFDSKHSPKTP</sequence>
<comment type="function">
    <text evidence="1">This protein specifically catalyzes the removal of signal peptides from prolipoproteins.</text>
</comment>
<comment type="catalytic activity">
    <reaction evidence="1">
        <text>Release of signal peptides from bacterial membrane prolipoproteins. Hydrolyzes -Xaa-Yaa-Zaa-|-(S,diacylglyceryl)Cys-, in which Xaa is hydrophobic (preferably Leu), and Yaa (Ala or Ser) and Zaa (Gly or Ala) have small, neutral side chains.</text>
        <dbReference type="EC" id="3.4.23.36"/>
    </reaction>
</comment>
<comment type="pathway">
    <text evidence="1">Protein modification; lipoprotein biosynthesis (signal peptide cleavage).</text>
</comment>
<comment type="subcellular location">
    <subcellularLocation>
        <location evidence="1">Cell inner membrane</location>
        <topology evidence="1">Multi-pass membrane protein</topology>
    </subcellularLocation>
</comment>
<comment type="similarity">
    <text evidence="1">Belongs to the peptidase A8 family.</text>
</comment>
<accession>B0U3Q8</accession>
<feature type="chain" id="PRO_1000097287" description="Lipoprotein signal peptidase">
    <location>
        <begin position="1"/>
        <end position="167"/>
    </location>
</feature>
<feature type="transmembrane region" description="Helical" evidence="1">
    <location>
        <begin position="10"/>
        <end position="30"/>
    </location>
</feature>
<feature type="transmembrane region" description="Helical" evidence="1">
    <location>
        <begin position="68"/>
        <end position="88"/>
    </location>
</feature>
<feature type="transmembrane region" description="Helical" evidence="1">
    <location>
        <begin position="98"/>
        <end position="118"/>
    </location>
</feature>
<feature type="transmembrane region" description="Helical" evidence="1">
    <location>
        <begin position="138"/>
        <end position="158"/>
    </location>
</feature>
<feature type="active site" evidence="1">
    <location>
        <position position="124"/>
    </location>
</feature>
<feature type="active site" evidence="1">
    <location>
        <position position="142"/>
    </location>
</feature>
<gene>
    <name evidence="1" type="primary">lspA</name>
    <name type="ordered locus">Xfasm12_1577</name>
</gene>
<keyword id="KW-0064">Aspartyl protease</keyword>
<keyword id="KW-0997">Cell inner membrane</keyword>
<keyword id="KW-1003">Cell membrane</keyword>
<keyword id="KW-0378">Hydrolase</keyword>
<keyword id="KW-0472">Membrane</keyword>
<keyword id="KW-0645">Protease</keyword>
<keyword id="KW-0812">Transmembrane</keyword>
<keyword id="KW-1133">Transmembrane helix</keyword>
<name>LSPA_XYLFM</name>